<keyword id="KW-0963">Cytoplasm</keyword>
<keyword id="KW-0444">Lipid biosynthesis</keyword>
<keyword id="KW-0443">Lipid metabolism</keyword>
<keyword id="KW-0594">Phospholipid biosynthesis</keyword>
<keyword id="KW-1208">Phospholipid metabolism</keyword>
<keyword id="KW-1185">Reference proteome</keyword>
<keyword id="KW-0808">Transferase</keyword>
<gene>
    <name evidence="1" type="primary">plsX</name>
    <name type="ordered locus">Dde_2427</name>
</gene>
<accession>Q30YM2</accession>
<protein>
    <recommendedName>
        <fullName evidence="1">Phosphate acyltransferase</fullName>
        <ecNumber evidence="1">2.3.1.274</ecNumber>
    </recommendedName>
    <alternativeName>
        <fullName evidence="1">Acyl-ACP phosphotransacylase</fullName>
    </alternativeName>
    <alternativeName>
        <fullName evidence="1">Acyl-[acyl-carrier-protein]--phosphate acyltransferase</fullName>
    </alternativeName>
    <alternativeName>
        <fullName evidence="1">Phosphate-acyl-ACP acyltransferase</fullName>
    </alternativeName>
</protein>
<organism>
    <name type="scientific">Oleidesulfovibrio alaskensis (strain ATCC BAA-1058 / DSM 17464 / G20)</name>
    <name type="common">Desulfovibrio alaskensis</name>
    <dbReference type="NCBI Taxonomy" id="207559"/>
    <lineage>
        <taxon>Bacteria</taxon>
        <taxon>Pseudomonadati</taxon>
        <taxon>Thermodesulfobacteriota</taxon>
        <taxon>Desulfovibrionia</taxon>
        <taxon>Desulfovibrionales</taxon>
        <taxon>Desulfovibrionaceae</taxon>
        <taxon>Oleidesulfovibrio</taxon>
    </lineage>
</organism>
<evidence type="ECO:0000255" key="1">
    <source>
        <dbReference type="HAMAP-Rule" id="MF_00019"/>
    </source>
</evidence>
<feature type="chain" id="PRO_0000329222" description="Phosphate acyltransferase">
    <location>
        <begin position="1"/>
        <end position="347"/>
    </location>
</feature>
<reference key="1">
    <citation type="journal article" date="2011" name="J. Bacteriol.">
        <title>Complete genome sequence and updated annotation of Desulfovibrio alaskensis G20.</title>
        <authorList>
            <person name="Hauser L.J."/>
            <person name="Land M.L."/>
            <person name="Brown S.D."/>
            <person name="Larimer F."/>
            <person name="Keller K.L."/>
            <person name="Rapp-Giles B.J."/>
            <person name="Price M.N."/>
            <person name="Lin M."/>
            <person name="Bruce D.C."/>
            <person name="Detter J.C."/>
            <person name="Tapia R."/>
            <person name="Han C.S."/>
            <person name="Goodwin L.A."/>
            <person name="Cheng J.F."/>
            <person name="Pitluck S."/>
            <person name="Copeland A."/>
            <person name="Lucas S."/>
            <person name="Nolan M."/>
            <person name="Lapidus A.L."/>
            <person name="Palumbo A.V."/>
            <person name="Wall J.D."/>
        </authorList>
    </citation>
    <scope>NUCLEOTIDE SEQUENCE [LARGE SCALE GENOMIC DNA]</scope>
    <source>
        <strain>ATCC BAA-1058 / DSM 17464 / G20</strain>
    </source>
</reference>
<sequence length="347" mass="36617">MSNSVPVIAVDAMGGDHGPSIVVPGAVRAARENSLKLILVGDKDAISAELNRLPLDGVAYDIVHASQVAGMEEKPSDILRRKKDASVQVACRLVRSGDADGIVSAGNSGATVACGMFIMGRIPGVERPALASVMPTEKKPCVLLDVGANVDCKPYHLFQFGLMAEAFARDLLEIETPRVGLLSIGEEEGKGNSQVKEAYELLREAKNINFVGNIEGCDLFTGNVDVAVCDGFVGNVALKLSEGLASSLARLLKRELLTGIKAKIGTFLARDAFRRFARFVDYAEYGGAPLLGLQGIAIVCHGASNEKAIASAVGMAGTFVSKGTYHHLVETISANEELTSYGKAVKQ</sequence>
<name>PLSX_OLEA2</name>
<comment type="function">
    <text evidence="1">Catalyzes the reversible formation of acyl-phosphate (acyl-PO(4)) from acyl-[acyl-carrier-protein] (acyl-ACP). This enzyme utilizes acyl-ACP as fatty acyl donor, but not acyl-CoA.</text>
</comment>
<comment type="catalytic activity">
    <reaction evidence="1">
        <text>a fatty acyl-[ACP] + phosphate = an acyl phosphate + holo-[ACP]</text>
        <dbReference type="Rhea" id="RHEA:42292"/>
        <dbReference type="Rhea" id="RHEA-COMP:9685"/>
        <dbReference type="Rhea" id="RHEA-COMP:14125"/>
        <dbReference type="ChEBI" id="CHEBI:43474"/>
        <dbReference type="ChEBI" id="CHEBI:59918"/>
        <dbReference type="ChEBI" id="CHEBI:64479"/>
        <dbReference type="ChEBI" id="CHEBI:138651"/>
        <dbReference type="EC" id="2.3.1.274"/>
    </reaction>
</comment>
<comment type="pathway">
    <text evidence="1">Lipid metabolism; phospholipid metabolism.</text>
</comment>
<comment type="subunit">
    <text evidence="1">Homodimer. Probably interacts with PlsY.</text>
</comment>
<comment type="subcellular location">
    <subcellularLocation>
        <location evidence="1">Cytoplasm</location>
    </subcellularLocation>
    <text evidence="1">Associated with the membrane possibly through PlsY.</text>
</comment>
<comment type="similarity">
    <text evidence="1">Belongs to the PlsX family.</text>
</comment>
<dbReference type="EC" id="2.3.1.274" evidence="1"/>
<dbReference type="EMBL" id="CP000112">
    <property type="protein sequence ID" value="ABB39224.1"/>
    <property type="molecule type" value="Genomic_DNA"/>
</dbReference>
<dbReference type="RefSeq" id="WP_011368293.1">
    <property type="nucleotide sequence ID" value="NC_007519.1"/>
</dbReference>
<dbReference type="SMR" id="Q30YM2"/>
<dbReference type="STRING" id="207559.Dde_2427"/>
<dbReference type="KEGG" id="dde:Dde_2427"/>
<dbReference type="eggNOG" id="COG0416">
    <property type="taxonomic scope" value="Bacteria"/>
</dbReference>
<dbReference type="HOGENOM" id="CLU_039379_1_1_7"/>
<dbReference type="UniPathway" id="UPA00085"/>
<dbReference type="Proteomes" id="UP000002710">
    <property type="component" value="Chromosome"/>
</dbReference>
<dbReference type="GO" id="GO:0005737">
    <property type="term" value="C:cytoplasm"/>
    <property type="evidence" value="ECO:0007669"/>
    <property type="project" value="UniProtKB-SubCell"/>
</dbReference>
<dbReference type="GO" id="GO:0043811">
    <property type="term" value="F:phosphate:acyl-[acyl carrier protein] acyltransferase activity"/>
    <property type="evidence" value="ECO:0007669"/>
    <property type="project" value="UniProtKB-UniRule"/>
</dbReference>
<dbReference type="GO" id="GO:0006633">
    <property type="term" value="P:fatty acid biosynthetic process"/>
    <property type="evidence" value="ECO:0007669"/>
    <property type="project" value="UniProtKB-UniRule"/>
</dbReference>
<dbReference type="GO" id="GO:0008654">
    <property type="term" value="P:phospholipid biosynthetic process"/>
    <property type="evidence" value="ECO:0007669"/>
    <property type="project" value="UniProtKB-KW"/>
</dbReference>
<dbReference type="Gene3D" id="3.40.718.10">
    <property type="entry name" value="Isopropylmalate Dehydrogenase"/>
    <property type="match status" value="1"/>
</dbReference>
<dbReference type="HAMAP" id="MF_00019">
    <property type="entry name" value="PlsX"/>
    <property type="match status" value="1"/>
</dbReference>
<dbReference type="InterPro" id="IPR003664">
    <property type="entry name" value="FA_synthesis"/>
</dbReference>
<dbReference type="InterPro" id="IPR012281">
    <property type="entry name" value="Phospholipid_synth_PlsX-like"/>
</dbReference>
<dbReference type="NCBIfam" id="TIGR00182">
    <property type="entry name" value="plsX"/>
    <property type="match status" value="1"/>
</dbReference>
<dbReference type="PANTHER" id="PTHR30100">
    <property type="entry name" value="FATTY ACID/PHOSPHOLIPID SYNTHESIS PROTEIN PLSX"/>
    <property type="match status" value="1"/>
</dbReference>
<dbReference type="PANTHER" id="PTHR30100:SF1">
    <property type="entry name" value="PHOSPHATE ACYLTRANSFERASE"/>
    <property type="match status" value="1"/>
</dbReference>
<dbReference type="Pfam" id="PF02504">
    <property type="entry name" value="FA_synthesis"/>
    <property type="match status" value="1"/>
</dbReference>
<dbReference type="PIRSF" id="PIRSF002465">
    <property type="entry name" value="Phsphlp_syn_PlsX"/>
    <property type="match status" value="1"/>
</dbReference>
<dbReference type="SUPFAM" id="SSF53659">
    <property type="entry name" value="Isocitrate/Isopropylmalate dehydrogenase-like"/>
    <property type="match status" value="1"/>
</dbReference>
<proteinExistence type="inferred from homology"/>